<feature type="chain" id="PRO_1000189606" description="Apo-citrate lyase phosphoribosyl-dephospho-CoA transferase">
    <location>
        <begin position="1"/>
        <end position="183"/>
    </location>
</feature>
<name>CITX_ECO8A</name>
<proteinExistence type="inferred from homology"/>
<accession>B7M4U6</accession>
<protein>
    <recommendedName>
        <fullName>Apo-citrate lyase phosphoribosyl-dephospho-CoA transferase</fullName>
        <ecNumber evidence="1">2.7.7.61</ecNumber>
    </recommendedName>
    <alternativeName>
        <fullName evidence="1">Apo-ACP nucleodityltransferase</fullName>
    </alternativeName>
    <alternativeName>
        <fullName evidence="1">Holo-ACP synthase</fullName>
    </alternativeName>
    <alternativeName>
        <fullName evidence="1">Holo-citrate lyase synthase</fullName>
    </alternativeName>
</protein>
<gene>
    <name evidence="1" type="primary">citX</name>
    <name type="ordered locus">ECIAI1_0598</name>
</gene>
<comment type="function">
    <text evidence="1">Transfers 2-(5''-triphosphoribosyl)-3'-dephosphocoenzyme-A on a serine residue to the apo-acyl carrier protein (gamma chain) of the citrate lyase to yield holo-acyl carrier protein.</text>
</comment>
<comment type="catalytic activity">
    <reaction evidence="1">
        <text>apo-[citrate lyase ACP] + 2'-(5''-triphospho-alpha-D-ribosyl)-3'-dephospho-CoA = holo-[citrate lyase ACP] + diphosphate</text>
        <dbReference type="Rhea" id="RHEA:16333"/>
        <dbReference type="Rhea" id="RHEA-COMP:10157"/>
        <dbReference type="Rhea" id="RHEA-COMP:10158"/>
        <dbReference type="ChEBI" id="CHEBI:29999"/>
        <dbReference type="ChEBI" id="CHEBI:33019"/>
        <dbReference type="ChEBI" id="CHEBI:61378"/>
        <dbReference type="ChEBI" id="CHEBI:82683"/>
        <dbReference type="EC" id="2.7.7.61"/>
    </reaction>
</comment>
<comment type="similarity">
    <text evidence="1">Belongs to the CitX family.</text>
</comment>
<reference key="1">
    <citation type="journal article" date="2009" name="PLoS Genet.">
        <title>Organised genome dynamics in the Escherichia coli species results in highly diverse adaptive paths.</title>
        <authorList>
            <person name="Touchon M."/>
            <person name="Hoede C."/>
            <person name="Tenaillon O."/>
            <person name="Barbe V."/>
            <person name="Baeriswyl S."/>
            <person name="Bidet P."/>
            <person name="Bingen E."/>
            <person name="Bonacorsi S."/>
            <person name="Bouchier C."/>
            <person name="Bouvet O."/>
            <person name="Calteau A."/>
            <person name="Chiapello H."/>
            <person name="Clermont O."/>
            <person name="Cruveiller S."/>
            <person name="Danchin A."/>
            <person name="Diard M."/>
            <person name="Dossat C."/>
            <person name="Karoui M.E."/>
            <person name="Frapy E."/>
            <person name="Garry L."/>
            <person name="Ghigo J.M."/>
            <person name="Gilles A.M."/>
            <person name="Johnson J."/>
            <person name="Le Bouguenec C."/>
            <person name="Lescat M."/>
            <person name="Mangenot S."/>
            <person name="Martinez-Jehanne V."/>
            <person name="Matic I."/>
            <person name="Nassif X."/>
            <person name="Oztas S."/>
            <person name="Petit M.A."/>
            <person name="Pichon C."/>
            <person name="Rouy Z."/>
            <person name="Ruf C.S."/>
            <person name="Schneider D."/>
            <person name="Tourret J."/>
            <person name="Vacherie B."/>
            <person name="Vallenet D."/>
            <person name="Medigue C."/>
            <person name="Rocha E.P.C."/>
            <person name="Denamur E."/>
        </authorList>
    </citation>
    <scope>NUCLEOTIDE SEQUENCE [LARGE SCALE GENOMIC DNA]</scope>
    <source>
        <strain>IAI1</strain>
    </source>
</reference>
<keyword id="KW-0548">Nucleotidyltransferase</keyword>
<keyword id="KW-0808">Transferase</keyword>
<dbReference type="EC" id="2.7.7.61" evidence="1"/>
<dbReference type="EMBL" id="CU928160">
    <property type="protein sequence ID" value="CAQ97468.1"/>
    <property type="molecule type" value="Genomic_DNA"/>
</dbReference>
<dbReference type="RefSeq" id="WP_000550424.1">
    <property type="nucleotide sequence ID" value="NC_011741.1"/>
</dbReference>
<dbReference type="SMR" id="B7M4U6"/>
<dbReference type="KEGG" id="ecr:ECIAI1_0598"/>
<dbReference type="HOGENOM" id="CLU_104529_1_1_6"/>
<dbReference type="GO" id="GO:0050519">
    <property type="term" value="F:holo-citrate lyase synthase activity"/>
    <property type="evidence" value="ECO:0007669"/>
    <property type="project" value="UniProtKB-UniRule"/>
</dbReference>
<dbReference type="GO" id="GO:0051191">
    <property type="term" value="P:prosthetic group biosynthetic process"/>
    <property type="evidence" value="ECO:0007669"/>
    <property type="project" value="InterPro"/>
</dbReference>
<dbReference type="HAMAP" id="MF_00398">
    <property type="entry name" value="CitX"/>
    <property type="match status" value="1"/>
</dbReference>
<dbReference type="InterPro" id="IPR005551">
    <property type="entry name" value="CitX"/>
</dbReference>
<dbReference type="NCBIfam" id="TIGR03124">
    <property type="entry name" value="citrate_citX"/>
    <property type="match status" value="1"/>
</dbReference>
<dbReference type="NCBIfam" id="NF002383">
    <property type="entry name" value="PRK01392.1"/>
    <property type="match status" value="1"/>
</dbReference>
<dbReference type="Pfam" id="PF03802">
    <property type="entry name" value="CitX"/>
    <property type="match status" value="1"/>
</dbReference>
<evidence type="ECO:0000255" key="1">
    <source>
        <dbReference type="HAMAP-Rule" id="MF_00398"/>
    </source>
</evidence>
<sequence>MHLLPELASHHAVSIPELLVSRDERQARQHVWLKRHPVPLVSFTVVAPGPIKDSEVTRRIFNHGVTALRALAAKQGWQIQEQAALVSASGPEGMLSIAAPARDLKLATIELEHSHPLGRLWDIDVLTPEGEILSRRDYSLPPRSCLLCEQSAAVCARGKTHQLTDLLNRMEALLNDVDACNVN</sequence>
<organism>
    <name type="scientific">Escherichia coli O8 (strain IAI1)</name>
    <dbReference type="NCBI Taxonomy" id="585034"/>
    <lineage>
        <taxon>Bacteria</taxon>
        <taxon>Pseudomonadati</taxon>
        <taxon>Pseudomonadota</taxon>
        <taxon>Gammaproteobacteria</taxon>
        <taxon>Enterobacterales</taxon>
        <taxon>Enterobacteriaceae</taxon>
        <taxon>Escherichia</taxon>
    </lineage>
</organism>